<name>GGS1_HYPPI</name>
<accession>A0A2I6PJ05</accession>
<organism>
    <name type="scientific">Hypoxylon pulicicidum</name>
    <dbReference type="NCBI Taxonomy" id="1243767"/>
    <lineage>
        <taxon>Eukaryota</taxon>
        <taxon>Fungi</taxon>
        <taxon>Dikarya</taxon>
        <taxon>Ascomycota</taxon>
        <taxon>Pezizomycotina</taxon>
        <taxon>Sordariomycetes</taxon>
        <taxon>Xylariomycetidae</taxon>
        <taxon>Xylariales</taxon>
        <taxon>Hypoxylaceae</taxon>
        <taxon>Hypoxylon</taxon>
    </lineage>
</organism>
<gene>
    <name evidence="4" type="primary">ggs1</name>
</gene>
<proteinExistence type="inferred from homology"/>
<dbReference type="EC" id="2.5.1.-" evidence="6"/>
<dbReference type="EC" id="2.5.1.1" evidence="1"/>
<dbReference type="EC" id="2.5.1.29" evidence="1"/>
<dbReference type="EC" id="2.5.1.10" evidence="1"/>
<dbReference type="EMBL" id="MG182146">
    <property type="protein sequence ID" value="AUM60068.1"/>
    <property type="molecule type" value="Genomic_DNA"/>
</dbReference>
<dbReference type="SMR" id="A0A2I6PJ05"/>
<dbReference type="GO" id="GO:0004337">
    <property type="term" value="F:(2E,6E)-farnesyl diphosphate synthase activity"/>
    <property type="evidence" value="ECO:0007669"/>
    <property type="project" value="UniProtKB-EC"/>
</dbReference>
<dbReference type="GO" id="GO:0004161">
    <property type="term" value="F:dimethylallyltranstransferase activity"/>
    <property type="evidence" value="ECO:0007669"/>
    <property type="project" value="UniProtKB-EC"/>
</dbReference>
<dbReference type="GO" id="GO:0004311">
    <property type="term" value="F:geranylgeranyl diphosphate synthase activity"/>
    <property type="evidence" value="ECO:0007669"/>
    <property type="project" value="UniProtKB-EC"/>
</dbReference>
<dbReference type="GO" id="GO:0046872">
    <property type="term" value="F:metal ion binding"/>
    <property type="evidence" value="ECO:0007669"/>
    <property type="project" value="UniProtKB-KW"/>
</dbReference>
<dbReference type="GO" id="GO:0046165">
    <property type="term" value="P:alcohol biosynthetic process"/>
    <property type="evidence" value="ECO:0007669"/>
    <property type="project" value="UniProtKB-ARBA"/>
</dbReference>
<dbReference type="GO" id="GO:0008299">
    <property type="term" value="P:isoprenoid biosynthetic process"/>
    <property type="evidence" value="ECO:0007669"/>
    <property type="project" value="InterPro"/>
</dbReference>
<dbReference type="GO" id="GO:0043386">
    <property type="term" value="P:mycotoxin biosynthetic process"/>
    <property type="evidence" value="ECO:0007669"/>
    <property type="project" value="UniProtKB-ARBA"/>
</dbReference>
<dbReference type="CDD" id="cd00685">
    <property type="entry name" value="Trans_IPPS_HT"/>
    <property type="match status" value="1"/>
</dbReference>
<dbReference type="Gene3D" id="1.10.600.10">
    <property type="entry name" value="Farnesyl Diphosphate Synthase"/>
    <property type="match status" value="1"/>
</dbReference>
<dbReference type="InterPro" id="IPR008949">
    <property type="entry name" value="Isoprenoid_synthase_dom_sf"/>
</dbReference>
<dbReference type="InterPro" id="IPR000092">
    <property type="entry name" value="Polyprenyl_synt"/>
</dbReference>
<dbReference type="InterPro" id="IPR033749">
    <property type="entry name" value="Polyprenyl_synt_CS"/>
</dbReference>
<dbReference type="PANTHER" id="PTHR12001">
    <property type="entry name" value="GERANYLGERANYL PYROPHOSPHATE SYNTHASE"/>
    <property type="match status" value="1"/>
</dbReference>
<dbReference type="PANTHER" id="PTHR12001:SF44">
    <property type="entry name" value="GERANYLGERANYL PYROPHOSPHATE SYNTHASE"/>
    <property type="match status" value="1"/>
</dbReference>
<dbReference type="Pfam" id="PF00348">
    <property type="entry name" value="polyprenyl_synt"/>
    <property type="match status" value="1"/>
</dbReference>
<dbReference type="SFLD" id="SFLDS00005">
    <property type="entry name" value="Isoprenoid_Synthase_Type_I"/>
    <property type="match status" value="1"/>
</dbReference>
<dbReference type="SUPFAM" id="SSF48576">
    <property type="entry name" value="Terpenoid synthases"/>
    <property type="match status" value="1"/>
</dbReference>
<dbReference type="PROSITE" id="PS00723">
    <property type="entry name" value="POLYPRENYL_SYNTHASE_1"/>
    <property type="match status" value="1"/>
</dbReference>
<dbReference type="PROSITE" id="PS00444">
    <property type="entry name" value="POLYPRENYL_SYNTHASE_2"/>
    <property type="match status" value="1"/>
</dbReference>
<sequence length="384" mass="43034">MVPNANSNTVSLQSPNAIPPRTSSTGYITPFPPAKSVLRPVPESDWLGQNNTRNRSSSTTAIPLTGMHATGPQDPARYETEDLNYTSRKTWSEQKEKVLVGPFEYLFAHPGKDFRTLMVNSFNAWLEVPQESLDVITKVVGMLHTASLLVDDVEDNSLLRRGLPVAHSIFGTAQTINSANYVYFCALQELQKLKNPEAINVYTEELLNLHRGQGMDLFWRDTLTCPTEEEYLEMVGNKTGGLFRLAIKLMQAESGTPIDCVPLVNILGIIFQIQDDYRNLSSPEYGQNKGLCEDLTEGKFSFLIIHSIRSNPSNLQLLNILKQKTTDDEVKRYAVKYMEGTGSFEYTQKVISILVDRARKMTDELDNGRGKSVGIHKILDKLVV</sequence>
<comment type="function">
    <text evidence="6">Catalyzes the trans-addition of the 3 molecules of isopentenyl diphosphate (IPP) onto dimethylallyl diphosphate (DMAPP) to form geranylgeranyl pyrophosphate (GGPP). GGPP is a precursor for the biosynthesis of many secondary metabolites, including the indole diterpenes nodulisporic acids (NA).</text>
</comment>
<comment type="catalytic activity">
    <reaction evidence="1">
        <text>isopentenyl diphosphate + dimethylallyl diphosphate = (2E)-geranyl diphosphate + diphosphate</text>
        <dbReference type="Rhea" id="RHEA:22408"/>
        <dbReference type="ChEBI" id="CHEBI:33019"/>
        <dbReference type="ChEBI" id="CHEBI:57623"/>
        <dbReference type="ChEBI" id="CHEBI:58057"/>
        <dbReference type="ChEBI" id="CHEBI:128769"/>
        <dbReference type="EC" id="2.5.1.1"/>
    </reaction>
</comment>
<comment type="catalytic activity">
    <reaction evidence="1">
        <text>isopentenyl diphosphate + (2E)-geranyl diphosphate = (2E,6E)-farnesyl diphosphate + diphosphate</text>
        <dbReference type="Rhea" id="RHEA:19361"/>
        <dbReference type="ChEBI" id="CHEBI:33019"/>
        <dbReference type="ChEBI" id="CHEBI:58057"/>
        <dbReference type="ChEBI" id="CHEBI:128769"/>
        <dbReference type="ChEBI" id="CHEBI:175763"/>
        <dbReference type="EC" id="2.5.1.10"/>
    </reaction>
</comment>
<comment type="catalytic activity">
    <reaction evidence="1">
        <text>isopentenyl diphosphate + (2E,6E)-farnesyl diphosphate = (2E,6E,10E)-geranylgeranyl diphosphate + diphosphate</text>
        <dbReference type="Rhea" id="RHEA:17653"/>
        <dbReference type="ChEBI" id="CHEBI:33019"/>
        <dbReference type="ChEBI" id="CHEBI:58756"/>
        <dbReference type="ChEBI" id="CHEBI:128769"/>
        <dbReference type="ChEBI" id="CHEBI:175763"/>
        <dbReference type="EC" id="2.5.1.29"/>
    </reaction>
</comment>
<comment type="cofactor">
    <cofactor evidence="1">
        <name>Mg(2+)</name>
        <dbReference type="ChEBI" id="CHEBI:18420"/>
    </cofactor>
    <text evidence="1">Binds 3 Mg(2+) ions per subunit.</text>
</comment>
<comment type="pathway">
    <text evidence="3">Secondary metabolite biosynthesis.</text>
</comment>
<comment type="similarity">
    <text evidence="5">Belongs to the FPP/GGPP synthase family.</text>
</comment>
<protein>
    <recommendedName>
        <fullName evidence="4">Geranylgeranyl pyrophosphate synthase</fullName>
        <shortName evidence="5">GGPP synthase</shortName>
        <shortName evidence="5">GGPPSase</shortName>
        <ecNumber evidence="6">2.5.1.-</ecNumber>
    </recommendedName>
    <alternativeName>
        <fullName evidence="1">(2E,6E)-farnesyl diphosphate synthase</fullName>
    </alternativeName>
    <alternativeName>
        <fullName evidence="1">Dimethylallyltranstransferase</fullName>
        <ecNumber evidence="1">2.5.1.1</ecNumber>
    </alternativeName>
    <alternativeName>
        <fullName evidence="1">Farnesyl diphosphate synthase</fullName>
    </alternativeName>
    <alternativeName>
        <fullName evidence="1">Farnesyltranstransferase</fullName>
        <ecNumber evidence="1">2.5.1.29</ecNumber>
    </alternativeName>
    <alternativeName>
        <fullName evidence="1">Geranylgeranyl diphosphate synthase</fullName>
    </alternativeName>
    <alternativeName>
        <fullName evidence="1">Geranyltranstransferase</fullName>
        <ecNumber evidence="1">2.5.1.10</ecNumber>
    </alternativeName>
</protein>
<reference key="1">
    <citation type="journal article" date="2018" name="J. Am. Chem. Soc.">
        <title>Heterologous biosynthesis of nodulisporic acid F.</title>
        <authorList>
            <person name="Van de Bittner K.C."/>
            <person name="Nicholson M.J."/>
            <person name="Bustamante L.Y."/>
            <person name="Kessans S.A."/>
            <person name="Ram A."/>
            <person name="van Dolleweerd C.J."/>
            <person name="Scott B."/>
            <person name="Parker E.J."/>
        </authorList>
    </citation>
    <scope>NUCLEOTIDE SEQUENCE [GENOMIC DNA]</scope>
    <scope>IDENTIFICATION</scope>
    <scope>FUNCTION</scope>
    <scope>PATHWAY</scope>
    <source>
        <strain>MF5954 / ATCC 74245</strain>
    </source>
</reference>
<keyword id="KW-0460">Magnesium</keyword>
<keyword id="KW-0479">Metal-binding</keyword>
<keyword id="KW-0808">Transferase</keyword>
<evidence type="ECO:0000250" key="1">
    <source>
        <dbReference type="UniProtKB" id="Q12051"/>
    </source>
</evidence>
<evidence type="ECO:0000256" key="2">
    <source>
        <dbReference type="SAM" id="MobiDB-lite"/>
    </source>
</evidence>
<evidence type="ECO:0000269" key="3">
    <source>
    </source>
</evidence>
<evidence type="ECO:0000303" key="4">
    <source>
    </source>
</evidence>
<evidence type="ECO:0000305" key="5"/>
<evidence type="ECO:0000305" key="6">
    <source>
    </source>
</evidence>
<feature type="chain" id="PRO_0000446554" description="Geranylgeranyl pyrophosphate synthase">
    <location>
        <begin position="1"/>
        <end position="384"/>
    </location>
</feature>
<feature type="region of interest" description="Disordered" evidence="2">
    <location>
        <begin position="1"/>
        <end position="25"/>
    </location>
</feature>
<feature type="region of interest" description="Disordered" evidence="2">
    <location>
        <begin position="39"/>
        <end position="78"/>
    </location>
</feature>
<feature type="compositionally biased region" description="Polar residues" evidence="2">
    <location>
        <begin position="47"/>
        <end position="62"/>
    </location>
</feature>
<feature type="binding site" evidence="1">
    <location>
        <position position="112"/>
    </location>
    <ligand>
        <name>isopentenyl diphosphate</name>
        <dbReference type="ChEBI" id="CHEBI:128769"/>
    </ligand>
</feature>
<feature type="binding site" evidence="1">
    <location>
        <position position="115"/>
    </location>
    <ligand>
        <name>isopentenyl diphosphate</name>
        <dbReference type="ChEBI" id="CHEBI:128769"/>
    </ligand>
</feature>
<feature type="binding site" evidence="1">
    <location>
        <position position="144"/>
    </location>
    <ligand>
        <name>isopentenyl diphosphate</name>
        <dbReference type="ChEBI" id="CHEBI:128769"/>
    </ligand>
</feature>
<feature type="binding site" evidence="1">
    <location>
        <position position="151"/>
    </location>
    <ligand>
        <name>Mg(2+)</name>
        <dbReference type="ChEBI" id="CHEBI:18420"/>
        <label>1</label>
    </ligand>
</feature>
<feature type="binding site" evidence="1">
    <location>
        <position position="151"/>
    </location>
    <ligand>
        <name>Mg(2+)</name>
        <dbReference type="ChEBI" id="CHEBI:18420"/>
        <label>2</label>
    </ligand>
</feature>
<feature type="binding site" evidence="1">
    <location>
        <position position="155"/>
    </location>
    <ligand>
        <name>Mg(2+)</name>
        <dbReference type="ChEBI" id="CHEBI:18420"/>
        <label>1</label>
    </ligand>
</feature>
<feature type="binding site" evidence="1">
    <location>
        <position position="155"/>
    </location>
    <ligand>
        <name>Mg(2+)</name>
        <dbReference type="ChEBI" id="CHEBI:18420"/>
        <label>2</label>
    </ligand>
</feature>
<feature type="binding site" evidence="1">
    <location>
        <position position="160"/>
    </location>
    <ligand>
        <name>dimethylallyl diphosphate</name>
        <dbReference type="ChEBI" id="CHEBI:57623"/>
    </ligand>
</feature>
<feature type="binding site" evidence="1">
    <location>
        <position position="161"/>
    </location>
    <ligand>
        <name>isopentenyl diphosphate</name>
        <dbReference type="ChEBI" id="CHEBI:128769"/>
    </ligand>
</feature>
<feature type="binding site" evidence="1">
    <location>
        <position position="238"/>
    </location>
    <ligand>
        <name>dimethylallyl diphosphate</name>
        <dbReference type="ChEBI" id="CHEBI:57623"/>
    </ligand>
</feature>
<feature type="binding site" evidence="1">
    <location>
        <position position="239"/>
    </location>
    <ligand>
        <name>dimethylallyl diphosphate</name>
        <dbReference type="ChEBI" id="CHEBI:57623"/>
    </ligand>
</feature>
<feature type="binding site" evidence="1">
    <location>
        <position position="272"/>
    </location>
    <ligand>
        <name>dimethylallyl diphosphate</name>
        <dbReference type="ChEBI" id="CHEBI:57623"/>
    </ligand>
</feature>
<feature type="binding site" evidence="1">
    <location>
        <position position="275"/>
    </location>
    <ligand>
        <name>Mg(2+)</name>
        <dbReference type="ChEBI" id="CHEBI:18420"/>
        <label>3</label>
    </ligand>
</feature>
<feature type="binding site" evidence="1">
    <location>
        <position position="279"/>
    </location>
    <ligand>
        <name>dimethylallyl diphosphate</name>
        <dbReference type="ChEBI" id="CHEBI:57623"/>
    </ligand>
</feature>
<feature type="binding site" evidence="1">
    <location>
        <position position="289"/>
    </location>
    <ligand>
        <name>dimethylallyl diphosphate</name>
        <dbReference type="ChEBI" id="CHEBI:57623"/>
    </ligand>
</feature>
<feature type="binding site" evidence="1">
    <location>
        <position position="299"/>
    </location>
    <ligand>
        <name>dimethylallyl diphosphate</name>
        <dbReference type="ChEBI" id="CHEBI:57623"/>
    </ligand>
</feature>
<feature type="site" description="Important for determining product chain length" evidence="1">
    <location>
        <position position="183"/>
    </location>
</feature>